<reference evidence="5" key="1">
    <citation type="journal article" date="2009" name="BMC Evol. Biol.">
        <title>A proteomic approach for studying insect phylogeny: CAPA peptides of ancient insect taxa (Dictyoptera, Blattoptera) as a test case.</title>
        <authorList>
            <person name="Roth S."/>
            <person name="Fromm B."/>
            <person name="Gaede G."/>
            <person name="Predel R."/>
        </authorList>
    </citation>
    <scope>PROTEIN SEQUENCE</scope>
    <scope>AMIDATION AT LEU-17</scope>
    <source>
        <tissue evidence="3">Abdominal perisympathetic organs</tissue>
    </source>
</reference>
<dbReference type="GO" id="GO:0005576">
    <property type="term" value="C:extracellular region"/>
    <property type="evidence" value="ECO:0007669"/>
    <property type="project" value="UniProtKB-SubCell"/>
</dbReference>
<dbReference type="GO" id="GO:0005184">
    <property type="term" value="F:neuropeptide hormone activity"/>
    <property type="evidence" value="ECO:0007669"/>
    <property type="project" value="InterPro"/>
</dbReference>
<dbReference type="GO" id="GO:0007218">
    <property type="term" value="P:neuropeptide signaling pathway"/>
    <property type="evidence" value="ECO:0007669"/>
    <property type="project" value="UniProtKB-KW"/>
</dbReference>
<dbReference type="InterPro" id="IPR001484">
    <property type="entry name" value="Pyrokinin_CS"/>
</dbReference>
<dbReference type="PROSITE" id="PS00539">
    <property type="entry name" value="PYROKININ"/>
    <property type="match status" value="1"/>
</dbReference>
<feature type="peptide" id="PRO_0000378701" description="Pyrokinin-5" evidence="3">
    <location>
        <begin position="1"/>
        <end position="17"/>
    </location>
</feature>
<feature type="modified residue" description="Leucine amide" evidence="3">
    <location>
        <position position="17"/>
    </location>
</feature>
<protein>
    <recommendedName>
        <fullName evidence="1">Pyrokinin-5</fullName>
    </recommendedName>
    <alternativeName>
        <fullName evidence="1">FXPRL-amide</fullName>
    </alternativeName>
    <alternativeName>
        <fullName evidence="4">LobDe-Capa-PK</fullName>
    </alternativeName>
</protein>
<comment type="function">
    <text evidence="1">Myoactive.</text>
</comment>
<comment type="subcellular location">
    <subcellularLocation>
        <location evidence="5">Secreted</location>
    </subcellularLocation>
</comment>
<comment type="similarity">
    <text evidence="2">Belongs to the pyrokinin family.</text>
</comment>
<name>PPK5_LOBDE</name>
<evidence type="ECO:0000250" key="1">
    <source>
        <dbReference type="UniProtKB" id="P82617"/>
    </source>
</evidence>
<evidence type="ECO:0000255" key="2"/>
<evidence type="ECO:0000269" key="3">
    <source>
    </source>
</evidence>
<evidence type="ECO:0000303" key="4">
    <source>
    </source>
</evidence>
<evidence type="ECO:0000305" key="5"/>
<sequence length="17" mass="1680">GSGGSGEANGMWFGPRL</sequence>
<accession>P85659</accession>
<keyword id="KW-0027">Amidation</keyword>
<keyword id="KW-0903">Direct protein sequencing</keyword>
<keyword id="KW-0527">Neuropeptide</keyword>
<keyword id="KW-0964">Secreted</keyword>
<organism>
    <name type="scientific">Loboptera decipiens</name>
    <name type="common">Field cockroach</name>
    <dbReference type="NCBI Taxonomy" id="242713"/>
    <lineage>
        <taxon>Eukaryota</taxon>
        <taxon>Metazoa</taxon>
        <taxon>Ecdysozoa</taxon>
        <taxon>Arthropoda</taxon>
        <taxon>Hexapoda</taxon>
        <taxon>Insecta</taxon>
        <taxon>Pterygota</taxon>
        <taxon>Neoptera</taxon>
        <taxon>Polyneoptera</taxon>
        <taxon>Dictyoptera</taxon>
        <taxon>Blattodea</taxon>
        <taxon>Blaberoidea</taxon>
        <taxon>Blattellidae</taxon>
        <taxon>Loboptera</taxon>
    </lineage>
</organism>
<proteinExistence type="evidence at protein level"/>